<dbReference type="EMBL" id="CP001389">
    <property type="protein sequence ID" value="ACP24976.1"/>
    <property type="molecule type" value="Genomic_DNA"/>
</dbReference>
<dbReference type="RefSeq" id="WP_012707757.1">
    <property type="nucleotide sequence ID" value="NC_012587.1"/>
</dbReference>
<dbReference type="RefSeq" id="YP_002825729.1">
    <property type="nucleotide sequence ID" value="NC_012587.1"/>
</dbReference>
<dbReference type="SMR" id="C3MAY3"/>
<dbReference type="STRING" id="394.NGR_c11940"/>
<dbReference type="KEGG" id="rhi:NGR_c11940"/>
<dbReference type="PATRIC" id="fig|394.7.peg.4010"/>
<dbReference type="eggNOG" id="COG0090">
    <property type="taxonomic scope" value="Bacteria"/>
</dbReference>
<dbReference type="HOGENOM" id="CLU_036235_2_1_5"/>
<dbReference type="OrthoDB" id="9778722at2"/>
<dbReference type="Proteomes" id="UP000001054">
    <property type="component" value="Chromosome"/>
</dbReference>
<dbReference type="GO" id="GO:0015934">
    <property type="term" value="C:large ribosomal subunit"/>
    <property type="evidence" value="ECO:0007669"/>
    <property type="project" value="InterPro"/>
</dbReference>
<dbReference type="GO" id="GO:0019843">
    <property type="term" value="F:rRNA binding"/>
    <property type="evidence" value="ECO:0007669"/>
    <property type="project" value="UniProtKB-UniRule"/>
</dbReference>
<dbReference type="GO" id="GO:0003735">
    <property type="term" value="F:structural constituent of ribosome"/>
    <property type="evidence" value="ECO:0007669"/>
    <property type="project" value="InterPro"/>
</dbReference>
<dbReference type="GO" id="GO:0016740">
    <property type="term" value="F:transferase activity"/>
    <property type="evidence" value="ECO:0007669"/>
    <property type="project" value="InterPro"/>
</dbReference>
<dbReference type="GO" id="GO:0002181">
    <property type="term" value="P:cytoplasmic translation"/>
    <property type="evidence" value="ECO:0007669"/>
    <property type="project" value="TreeGrafter"/>
</dbReference>
<dbReference type="FunFam" id="2.30.30.30:FF:000001">
    <property type="entry name" value="50S ribosomal protein L2"/>
    <property type="match status" value="1"/>
</dbReference>
<dbReference type="FunFam" id="2.40.50.140:FF:000003">
    <property type="entry name" value="50S ribosomal protein L2"/>
    <property type="match status" value="1"/>
</dbReference>
<dbReference type="FunFam" id="4.10.950.10:FF:000001">
    <property type="entry name" value="50S ribosomal protein L2"/>
    <property type="match status" value="1"/>
</dbReference>
<dbReference type="Gene3D" id="2.30.30.30">
    <property type="match status" value="1"/>
</dbReference>
<dbReference type="Gene3D" id="2.40.50.140">
    <property type="entry name" value="Nucleic acid-binding proteins"/>
    <property type="match status" value="1"/>
</dbReference>
<dbReference type="Gene3D" id="4.10.950.10">
    <property type="entry name" value="Ribosomal protein L2, domain 3"/>
    <property type="match status" value="1"/>
</dbReference>
<dbReference type="HAMAP" id="MF_01320_B">
    <property type="entry name" value="Ribosomal_uL2_B"/>
    <property type="match status" value="1"/>
</dbReference>
<dbReference type="InterPro" id="IPR012340">
    <property type="entry name" value="NA-bd_OB-fold"/>
</dbReference>
<dbReference type="InterPro" id="IPR014722">
    <property type="entry name" value="Rib_uL2_dom2"/>
</dbReference>
<dbReference type="InterPro" id="IPR002171">
    <property type="entry name" value="Ribosomal_uL2"/>
</dbReference>
<dbReference type="InterPro" id="IPR005880">
    <property type="entry name" value="Ribosomal_uL2_bac/org-type"/>
</dbReference>
<dbReference type="InterPro" id="IPR022669">
    <property type="entry name" value="Ribosomal_uL2_C"/>
</dbReference>
<dbReference type="InterPro" id="IPR022671">
    <property type="entry name" value="Ribosomal_uL2_CS"/>
</dbReference>
<dbReference type="InterPro" id="IPR014726">
    <property type="entry name" value="Ribosomal_uL2_dom3"/>
</dbReference>
<dbReference type="InterPro" id="IPR022666">
    <property type="entry name" value="Ribosomal_uL2_RNA-bd_dom"/>
</dbReference>
<dbReference type="InterPro" id="IPR008991">
    <property type="entry name" value="Translation_prot_SH3-like_sf"/>
</dbReference>
<dbReference type="NCBIfam" id="TIGR01171">
    <property type="entry name" value="rplB_bact"/>
    <property type="match status" value="1"/>
</dbReference>
<dbReference type="PANTHER" id="PTHR13691:SF5">
    <property type="entry name" value="LARGE RIBOSOMAL SUBUNIT PROTEIN UL2M"/>
    <property type="match status" value="1"/>
</dbReference>
<dbReference type="PANTHER" id="PTHR13691">
    <property type="entry name" value="RIBOSOMAL PROTEIN L2"/>
    <property type="match status" value="1"/>
</dbReference>
<dbReference type="Pfam" id="PF00181">
    <property type="entry name" value="Ribosomal_L2"/>
    <property type="match status" value="1"/>
</dbReference>
<dbReference type="Pfam" id="PF03947">
    <property type="entry name" value="Ribosomal_L2_C"/>
    <property type="match status" value="1"/>
</dbReference>
<dbReference type="PIRSF" id="PIRSF002158">
    <property type="entry name" value="Ribosomal_L2"/>
    <property type="match status" value="1"/>
</dbReference>
<dbReference type="SMART" id="SM01383">
    <property type="entry name" value="Ribosomal_L2"/>
    <property type="match status" value="1"/>
</dbReference>
<dbReference type="SMART" id="SM01382">
    <property type="entry name" value="Ribosomal_L2_C"/>
    <property type="match status" value="1"/>
</dbReference>
<dbReference type="SUPFAM" id="SSF50249">
    <property type="entry name" value="Nucleic acid-binding proteins"/>
    <property type="match status" value="1"/>
</dbReference>
<dbReference type="SUPFAM" id="SSF50104">
    <property type="entry name" value="Translation proteins SH3-like domain"/>
    <property type="match status" value="1"/>
</dbReference>
<dbReference type="PROSITE" id="PS00467">
    <property type="entry name" value="RIBOSOMAL_L2"/>
    <property type="match status" value="1"/>
</dbReference>
<feature type="chain" id="PRO_1000165764" description="Large ribosomal subunit protein uL2">
    <location>
        <begin position="1"/>
        <end position="278"/>
    </location>
</feature>
<feature type="region of interest" description="Disordered" evidence="2">
    <location>
        <begin position="201"/>
        <end position="278"/>
    </location>
</feature>
<feature type="compositionally biased region" description="Basic residues" evidence="2">
    <location>
        <begin position="210"/>
        <end position="221"/>
    </location>
</feature>
<proteinExistence type="inferred from homology"/>
<evidence type="ECO:0000255" key="1">
    <source>
        <dbReference type="HAMAP-Rule" id="MF_01320"/>
    </source>
</evidence>
<evidence type="ECO:0000256" key="2">
    <source>
        <dbReference type="SAM" id="MobiDB-lite"/>
    </source>
</evidence>
<evidence type="ECO:0000305" key="3"/>
<comment type="function">
    <text evidence="1">One of the primary rRNA binding proteins. Required for association of the 30S and 50S subunits to form the 70S ribosome, for tRNA binding and peptide bond formation. It has been suggested to have peptidyltransferase activity; this is somewhat controversial. Makes several contacts with the 16S rRNA in the 70S ribosome.</text>
</comment>
<comment type="subunit">
    <text evidence="1">Part of the 50S ribosomal subunit. Forms a bridge to the 30S subunit in the 70S ribosome.</text>
</comment>
<comment type="similarity">
    <text evidence="1">Belongs to the universal ribosomal protein uL2 family.</text>
</comment>
<accession>C3MAY3</accession>
<protein>
    <recommendedName>
        <fullName evidence="1">Large ribosomal subunit protein uL2</fullName>
    </recommendedName>
    <alternativeName>
        <fullName evidence="3">50S ribosomal protein L2</fullName>
    </alternativeName>
</protein>
<gene>
    <name evidence="1" type="primary">rplB</name>
    <name type="ordered locus">NGR_c11940</name>
</gene>
<keyword id="KW-1185">Reference proteome</keyword>
<keyword id="KW-0687">Ribonucleoprotein</keyword>
<keyword id="KW-0689">Ribosomal protein</keyword>
<keyword id="KW-0694">RNA-binding</keyword>
<keyword id="KW-0699">rRNA-binding</keyword>
<sequence>MALKSFNPTTPSQRQLVIVDRAGLYKGKPVKTLTEGLSSKGGRNNLGRITVRFQGGGHKRTYRLVDFKRRKFDVEGTVERLEYDPNRTAFIALVNYADGEQAYILAPQRLAAGDKVIASDKAVDVKPGNTMPLQFIPVGSIIHNVEMKPGKGGQIARSAGTYAQLVGRDQGMAILRLNSGEQRLVHGSCLASIGAVSNPDHGNINDGKAGRSRWRGKRPHVRGVVMNPVDHPHGGGEGRTSGGRHPVTPWGKPTKGKRTRSNKSTDKFIMRSRHQRKK</sequence>
<reference key="1">
    <citation type="journal article" date="2009" name="Appl. Environ. Microbiol.">
        <title>Rhizobium sp. strain NGR234 possesses a remarkable number of secretion systems.</title>
        <authorList>
            <person name="Schmeisser C."/>
            <person name="Liesegang H."/>
            <person name="Krysciak D."/>
            <person name="Bakkou N."/>
            <person name="Le Quere A."/>
            <person name="Wollherr A."/>
            <person name="Heinemeyer I."/>
            <person name="Morgenstern B."/>
            <person name="Pommerening-Roeser A."/>
            <person name="Flores M."/>
            <person name="Palacios R."/>
            <person name="Brenner S."/>
            <person name="Gottschalk G."/>
            <person name="Schmitz R.A."/>
            <person name="Broughton W.J."/>
            <person name="Perret X."/>
            <person name="Strittmatter A.W."/>
            <person name="Streit W.R."/>
        </authorList>
    </citation>
    <scope>NUCLEOTIDE SEQUENCE [LARGE SCALE GENOMIC DNA]</scope>
    <source>
        <strain>NBRC 101917 / NGR234</strain>
    </source>
</reference>
<organism>
    <name type="scientific">Sinorhizobium fredii (strain NBRC 101917 / NGR234)</name>
    <dbReference type="NCBI Taxonomy" id="394"/>
    <lineage>
        <taxon>Bacteria</taxon>
        <taxon>Pseudomonadati</taxon>
        <taxon>Pseudomonadota</taxon>
        <taxon>Alphaproteobacteria</taxon>
        <taxon>Hyphomicrobiales</taxon>
        <taxon>Rhizobiaceae</taxon>
        <taxon>Sinorhizobium/Ensifer group</taxon>
        <taxon>Sinorhizobium</taxon>
    </lineage>
</organism>
<name>RL2_SINFN</name>